<dbReference type="EC" id="1.7.1.13" evidence="1"/>
<dbReference type="EMBL" id="AE017223">
    <property type="protein sequence ID" value="AAX74527.1"/>
    <property type="molecule type" value="Genomic_DNA"/>
</dbReference>
<dbReference type="RefSeq" id="WP_002964310.1">
    <property type="nucleotide sequence ID" value="NC_006932.1"/>
</dbReference>
<dbReference type="SMR" id="Q57CV7"/>
<dbReference type="DNASU" id="3787830"/>
<dbReference type="EnsemblBacteria" id="AAX74527">
    <property type="protein sequence ID" value="AAX74527"/>
    <property type="gene ID" value="BruAb1_1189"/>
</dbReference>
<dbReference type="GeneID" id="93016485"/>
<dbReference type="KEGG" id="bmb:BruAb1_1189"/>
<dbReference type="HOGENOM" id="CLU_102489_0_1_5"/>
<dbReference type="UniPathway" id="UPA00392"/>
<dbReference type="Proteomes" id="UP000000540">
    <property type="component" value="Chromosome I"/>
</dbReference>
<dbReference type="GO" id="GO:0005737">
    <property type="term" value="C:cytoplasm"/>
    <property type="evidence" value="ECO:0007669"/>
    <property type="project" value="UniProtKB-SubCell"/>
</dbReference>
<dbReference type="GO" id="GO:0033739">
    <property type="term" value="F:preQ1 synthase activity"/>
    <property type="evidence" value="ECO:0007669"/>
    <property type="project" value="UniProtKB-UniRule"/>
</dbReference>
<dbReference type="GO" id="GO:0008616">
    <property type="term" value="P:queuosine biosynthetic process"/>
    <property type="evidence" value="ECO:0007669"/>
    <property type="project" value="UniProtKB-UniRule"/>
</dbReference>
<dbReference type="GO" id="GO:0006400">
    <property type="term" value="P:tRNA modification"/>
    <property type="evidence" value="ECO:0007669"/>
    <property type="project" value="UniProtKB-UniRule"/>
</dbReference>
<dbReference type="Gene3D" id="3.30.1130.10">
    <property type="match status" value="1"/>
</dbReference>
<dbReference type="HAMAP" id="MF_00818">
    <property type="entry name" value="QueF_type1"/>
    <property type="match status" value="1"/>
</dbReference>
<dbReference type="InterPro" id="IPR043133">
    <property type="entry name" value="GTP-CH-I_C/QueF"/>
</dbReference>
<dbReference type="InterPro" id="IPR050084">
    <property type="entry name" value="NADPH_dep_7-cyano-7-deazaG_red"/>
</dbReference>
<dbReference type="InterPro" id="IPR029500">
    <property type="entry name" value="QueF"/>
</dbReference>
<dbReference type="InterPro" id="IPR016856">
    <property type="entry name" value="QueF_type1"/>
</dbReference>
<dbReference type="NCBIfam" id="TIGR03139">
    <property type="entry name" value="QueF-II"/>
    <property type="match status" value="1"/>
</dbReference>
<dbReference type="PANTHER" id="PTHR34354">
    <property type="entry name" value="NADPH-DEPENDENT 7-CYANO-7-DEAZAGUANINE REDUCTASE"/>
    <property type="match status" value="1"/>
</dbReference>
<dbReference type="PANTHER" id="PTHR34354:SF1">
    <property type="entry name" value="NADPH-DEPENDENT 7-CYANO-7-DEAZAGUANINE REDUCTASE"/>
    <property type="match status" value="1"/>
</dbReference>
<dbReference type="Pfam" id="PF14489">
    <property type="entry name" value="QueF"/>
    <property type="match status" value="1"/>
</dbReference>
<dbReference type="SUPFAM" id="SSF55620">
    <property type="entry name" value="Tetrahydrobiopterin biosynthesis enzymes-like"/>
    <property type="match status" value="1"/>
</dbReference>
<gene>
    <name evidence="1" type="primary">queF</name>
    <name type="ordered locus">BruAb1_1189</name>
</gene>
<name>QUEF_BRUAB</name>
<accession>Q57CV7</accession>
<feature type="chain" id="PRO_0000162964" description="NADPH-dependent 7-cyano-7-deazaguanine reductase">
    <location>
        <begin position="1"/>
        <end position="155"/>
    </location>
</feature>
<feature type="active site" description="Thioimide intermediate" evidence="1">
    <location>
        <position position="53"/>
    </location>
</feature>
<feature type="active site" description="Proton donor" evidence="1">
    <location>
        <position position="60"/>
    </location>
</feature>
<feature type="binding site" evidence="1">
    <location>
        <begin position="75"/>
        <end position="77"/>
    </location>
    <ligand>
        <name>substrate</name>
    </ligand>
</feature>
<feature type="binding site" evidence="1">
    <location>
        <begin position="94"/>
        <end position="95"/>
    </location>
    <ligand>
        <name>substrate</name>
    </ligand>
</feature>
<reference key="1">
    <citation type="journal article" date="2005" name="J. Bacteriol.">
        <title>Completion of the genome sequence of Brucella abortus and comparison to the highly similar genomes of Brucella melitensis and Brucella suis.</title>
        <authorList>
            <person name="Halling S.M."/>
            <person name="Peterson-Burch B.D."/>
            <person name="Bricker B.J."/>
            <person name="Zuerner R.L."/>
            <person name="Qing Z."/>
            <person name="Li L.-L."/>
            <person name="Kapur V."/>
            <person name="Alt D.P."/>
            <person name="Olsen S.C."/>
        </authorList>
    </citation>
    <scope>NUCLEOTIDE SEQUENCE [LARGE SCALE GENOMIC DNA]</scope>
    <source>
        <strain>9-941</strain>
    </source>
</reference>
<keyword id="KW-0963">Cytoplasm</keyword>
<keyword id="KW-0521">NADP</keyword>
<keyword id="KW-0560">Oxidoreductase</keyword>
<keyword id="KW-0671">Queuosine biosynthesis</keyword>
<comment type="function">
    <text evidence="1">Catalyzes the NADPH-dependent reduction of 7-cyano-7-deazaguanine (preQ0) to 7-aminomethyl-7-deazaguanine (preQ1).</text>
</comment>
<comment type="catalytic activity">
    <reaction evidence="1">
        <text>7-aminomethyl-7-carbaguanine + 2 NADP(+) = 7-cyano-7-deazaguanine + 2 NADPH + 3 H(+)</text>
        <dbReference type="Rhea" id="RHEA:13409"/>
        <dbReference type="ChEBI" id="CHEBI:15378"/>
        <dbReference type="ChEBI" id="CHEBI:45075"/>
        <dbReference type="ChEBI" id="CHEBI:57783"/>
        <dbReference type="ChEBI" id="CHEBI:58349"/>
        <dbReference type="ChEBI" id="CHEBI:58703"/>
        <dbReference type="EC" id="1.7.1.13"/>
    </reaction>
</comment>
<comment type="pathway">
    <text evidence="1">tRNA modification; tRNA-queuosine biosynthesis.</text>
</comment>
<comment type="subcellular location">
    <subcellularLocation>
        <location evidence="1">Cytoplasm</location>
    </subcellularLocation>
</comment>
<comment type="similarity">
    <text evidence="1">Belongs to the GTP cyclohydrolase I family. QueF type 1 subfamily.</text>
</comment>
<organism>
    <name type="scientific">Brucella abortus biovar 1 (strain 9-941)</name>
    <dbReference type="NCBI Taxonomy" id="262698"/>
    <lineage>
        <taxon>Bacteria</taxon>
        <taxon>Pseudomonadati</taxon>
        <taxon>Pseudomonadota</taxon>
        <taxon>Alphaproteobacteria</taxon>
        <taxon>Hyphomicrobiales</taxon>
        <taxon>Brucellaceae</taxon>
        <taxon>Brucella/Ochrobactrum group</taxon>
        <taxon>Brucella</taxon>
    </lineage>
</organism>
<protein>
    <recommendedName>
        <fullName evidence="1">NADPH-dependent 7-cyano-7-deazaguanine reductase</fullName>
        <ecNumber evidence="1">1.7.1.13</ecNumber>
    </recommendedName>
    <alternativeName>
        <fullName evidence="1">7-cyano-7-carbaguanine reductase</fullName>
    </alternativeName>
    <alternativeName>
        <fullName evidence="1">NADPH-dependent nitrile oxidoreductase</fullName>
    </alternativeName>
    <alternativeName>
        <fullName evidence="1">PreQ(0) reductase</fullName>
    </alternativeName>
</protein>
<evidence type="ECO:0000255" key="1">
    <source>
        <dbReference type="HAMAP-Rule" id="MF_00818"/>
    </source>
</evidence>
<sequence>MSENTIYSGLKQLGSHTDIPLTPEEAVLERVANPQEGTPYCVRFTAPEFSSLCPMTGQPDFAHLVIDYVPGKWLVESKSLKLFLFSFRNHGAFHEDCTVTIGKRLVDLLEPEWLRIGGYWYPRGGIPIDVFYQTGAAPLNVWIPEQGVANYRGRG</sequence>
<proteinExistence type="inferred from homology"/>